<organism>
    <name type="scientific">Vibrio campbellii (strain ATCC BAA-1116)</name>
    <dbReference type="NCBI Taxonomy" id="2902295"/>
    <lineage>
        <taxon>Bacteria</taxon>
        <taxon>Pseudomonadati</taxon>
        <taxon>Pseudomonadota</taxon>
        <taxon>Gammaproteobacteria</taxon>
        <taxon>Vibrionales</taxon>
        <taxon>Vibrionaceae</taxon>
        <taxon>Vibrio</taxon>
    </lineage>
</organism>
<reference key="1">
    <citation type="submission" date="2007-08" db="EMBL/GenBank/DDBJ databases">
        <authorList>
            <consortium name="The Vibrio harveyi Genome Sequencing Project"/>
            <person name="Bassler B."/>
            <person name="Clifton S.W."/>
            <person name="Fulton L."/>
            <person name="Delehaunty K."/>
            <person name="Fronick C."/>
            <person name="Harrison M."/>
            <person name="Markivic C."/>
            <person name="Fulton R."/>
            <person name="Tin-Wollam A.-M."/>
            <person name="Shah N."/>
            <person name="Pepin K."/>
            <person name="Nash W."/>
            <person name="Thiruvilangam P."/>
            <person name="Bhonagiri V."/>
            <person name="Waters C."/>
            <person name="Tu K.C."/>
            <person name="Irgon J."/>
            <person name="Wilson R.K."/>
        </authorList>
    </citation>
    <scope>NUCLEOTIDE SEQUENCE [LARGE SCALE GENOMIC DNA]</scope>
    <source>
        <strain>ATCC BAA-1116 / BB120</strain>
    </source>
</reference>
<gene>
    <name evidence="1" type="primary">pyrB</name>
    <name type="ordered locus">VIBHAR_03647</name>
</gene>
<proteinExistence type="inferred from homology"/>
<dbReference type="EC" id="2.1.3.2" evidence="1"/>
<dbReference type="EMBL" id="CP000789">
    <property type="protein sequence ID" value="ABU72561.1"/>
    <property type="status" value="ALT_INIT"/>
    <property type="molecule type" value="Genomic_DNA"/>
</dbReference>
<dbReference type="RefSeq" id="WP_021017973.1">
    <property type="nucleotide sequence ID" value="NC_009783.1"/>
</dbReference>
<dbReference type="SMR" id="A7MSE0"/>
<dbReference type="KEGG" id="vha:VIBHAR_03647"/>
<dbReference type="PATRIC" id="fig|338187.25.peg.2589"/>
<dbReference type="UniPathway" id="UPA00070">
    <property type="reaction ID" value="UER00116"/>
</dbReference>
<dbReference type="Proteomes" id="UP000008152">
    <property type="component" value="Chromosome I"/>
</dbReference>
<dbReference type="GO" id="GO:0005829">
    <property type="term" value="C:cytosol"/>
    <property type="evidence" value="ECO:0007669"/>
    <property type="project" value="TreeGrafter"/>
</dbReference>
<dbReference type="GO" id="GO:0016597">
    <property type="term" value="F:amino acid binding"/>
    <property type="evidence" value="ECO:0007669"/>
    <property type="project" value="InterPro"/>
</dbReference>
<dbReference type="GO" id="GO:0004070">
    <property type="term" value="F:aspartate carbamoyltransferase activity"/>
    <property type="evidence" value="ECO:0007669"/>
    <property type="project" value="UniProtKB-UniRule"/>
</dbReference>
<dbReference type="GO" id="GO:0006207">
    <property type="term" value="P:'de novo' pyrimidine nucleobase biosynthetic process"/>
    <property type="evidence" value="ECO:0007669"/>
    <property type="project" value="InterPro"/>
</dbReference>
<dbReference type="GO" id="GO:0044205">
    <property type="term" value="P:'de novo' UMP biosynthetic process"/>
    <property type="evidence" value="ECO:0007669"/>
    <property type="project" value="UniProtKB-UniRule"/>
</dbReference>
<dbReference type="GO" id="GO:0006520">
    <property type="term" value="P:amino acid metabolic process"/>
    <property type="evidence" value="ECO:0007669"/>
    <property type="project" value="InterPro"/>
</dbReference>
<dbReference type="FunFam" id="3.40.50.1370:FF:000001">
    <property type="entry name" value="Aspartate carbamoyltransferase"/>
    <property type="match status" value="1"/>
</dbReference>
<dbReference type="FunFam" id="3.40.50.1370:FF:000002">
    <property type="entry name" value="Aspartate carbamoyltransferase 2"/>
    <property type="match status" value="1"/>
</dbReference>
<dbReference type="Gene3D" id="3.40.50.1370">
    <property type="entry name" value="Aspartate/ornithine carbamoyltransferase"/>
    <property type="match status" value="2"/>
</dbReference>
<dbReference type="HAMAP" id="MF_00001">
    <property type="entry name" value="Asp_carb_tr"/>
    <property type="match status" value="1"/>
</dbReference>
<dbReference type="InterPro" id="IPR006132">
    <property type="entry name" value="Asp/Orn_carbamoyltranf_P-bd"/>
</dbReference>
<dbReference type="InterPro" id="IPR006130">
    <property type="entry name" value="Asp/Orn_carbamoylTrfase"/>
</dbReference>
<dbReference type="InterPro" id="IPR036901">
    <property type="entry name" value="Asp/Orn_carbamoylTrfase_sf"/>
</dbReference>
<dbReference type="InterPro" id="IPR002082">
    <property type="entry name" value="Asp_carbamoyltransf"/>
</dbReference>
<dbReference type="InterPro" id="IPR006131">
    <property type="entry name" value="Asp_carbamoyltransf_Asp/Orn-bd"/>
</dbReference>
<dbReference type="NCBIfam" id="TIGR00670">
    <property type="entry name" value="asp_carb_tr"/>
    <property type="match status" value="1"/>
</dbReference>
<dbReference type="NCBIfam" id="NF002032">
    <property type="entry name" value="PRK00856.1"/>
    <property type="match status" value="1"/>
</dbReference>
<dbReference type="PANTHER" id="PTHR45753:SF6">
    <property type="entry name" value="ASPARTATE CARBAMOYLTRANSFERASE"/>
    <property type="match status" value="1"/>
</dbReference>
<dbReference type="PANTHER" id="PTHR45753">
    <property type="entry name" value="ORNITHINE CARBAMOYLTRANSFERASE, MITOCHONDRIAL"/>
    <property type="match status" value="1"/>
</dbReference>
<dbReference type="Pfam" id="PF00185">
    <property type="entry name" value="OTCace"/>
    <property type="match status" value="1"/>
</dbReference>
<dbReference type="Pfam" id="PF02729">
    <property type="entry name" value="OTCace_N"/>
    <property type="match status" value="1"/>
</dbReference>
<dbReference type="PRINTS" id="PR00100">
    <property type="entry name" value="AOTCASE"/>
</dbReference>
<dbReference type="PRINTS" id="PR00101">
    <property type="entry name" value="ATCASE"/>
</dbReference>
<dbReference type="SUPFAM" id="SSF53671">
    <property type="entry name" value="Aspartate/ornithine carbamoyltransferase"/>
    <property type="match status" value="1"/>
</dbReference>
<dbReference type="PROSITE" id="PS00097">
    <property type="entry name" value="CARBAMOYLTRANSFERASE"/>
    <property type="match status" value="1"/>
</dbReference>
<feature type="chain" id="PRO_0000321182" description="Aspartate carbamoyltransferase catalytic subunit">
    <location>
        <begin position="1"/>
        <end position="309"/>
    </location>
</feature>
<feature type="binding site" evidence="1">
    <location>
        <position position="55"/>
    </location>
    <ligand>
        <name>carbamoyl phosphate</name>
        <dbReference type="ChEBI" id="CHEBI:58228"/>
    </ligand>
</feature>
<feature type="binding site" evidence="1">
    <location>
        <position position="56"/>
    </location>
    <ligand>
        <name>carbamoyl phosphate</name>
        <dbReference type="ChEBI" id="CHEBI:58228"/>
    </ligand>
</feature>
<feature type="binding site" evidence="1">
    <location>
        <position position="85"/>
    </location>
    <ligand>
        <name>L-aspartate</name>
        <dbReference type="ChEBI" id="CHEBI:29991"/>
    </ligand>
</feature>
<feature type="binding site" evidence="1">
    <location>
        <position position="106"/>
    </location>
    <ligand>
        <name>carbamoyl phosphate</name>
        <dbReference type="ChEBI" id="CHEBI:58228"/>
    </ligand>
</feature>
<feature type="binding site" evidence="1">
    <location>
        <position position="135"/>
    </location>
    <ligand>
        <name>carbamoyl phosphate</name>
        <dbReference type="ChEBI" id="CHEBI:58228"/>
    </ligand>
</feature>
<feature type="binding site" evidence="1">
    <location>
        <position position="138"/>
    </location>
    <ligand>
        <name>carbamoyl phosphate</name>
        <dbReference type="ChEBI" id="CHEBI:58228"/>
    </ligand>
</feature>
<feature type="binding site" evidence="1">
    <location>
        <position position="168"/>
    </location>
    <ligand>
        <name>L-aspartate</name>
        <dbReference type="ChEBI" id="CHEBI:29991"/>
    </ligand>
</feature>
<feature type="binding site" evidence="1">
    <location>
        <position position="230"/>
    </location>
    <ligand>
        <name>L-aspartate</name>
        <dbReference type="ChEBI" id="CHEBI:29991"/>
    </ligand>
</feature>
<feature type="binding site" evidence="1">
    <location>
        <position position="268"/>
    </location>
    <ligand>
        <name>carbamoyl phosphate</name>
        <dbReference type="ChEBI" id="CHEBI:58228"/>
    </ligand>
</feature>
<feature type="binding site" evidence="1">
    <location>
        <position position="269"/>
    </location>
    <ligand>
        <name>carbamoyl phosphate</name>
        <dbReference type="ChEBI" id="CHEBI:58228"/>
    </ligand>
</feature>
<accession>A7MSE0</accession>
<name>PYRB_VIBC1</name>
<sequence>MANSLYQKHIISIPELSREELELIVETAGQLKKEPRPELIKNKVVASCFFEPSTRTRLSFETAIQRIGGDVIGFDNGGNTSLAKKGETLSDSVQVISSYVDAFVMRHPQEGAARLASEFSNGVPVINAGDGANQHPTQTLLDLYTIAETQSRLDNLNVAFVGDLKYGRTVHSLTQALAKFNNIRFFFVAPEALAMPDYLCEELDEAGIQYSLHTDMESVIPELDILYMTRVQKERFDESEYAHIKSAYILTAALLEGARENLKVLHPLPRVDEITTDVDVTPHAYYFQQAENGVYARQALLALVLNETL</sequence>
<comment type="function">
    <text evidence="1">Catalyzes the condensation of carbamoyl phosphate and aspartate to form carbamoyl aspartate and inorganic phosphate, the committed step in the de novo pyrimidine nucleotide biosynthesis pathway.</text>
</comment>
<comment type="catalytic activity">
    <reaction evidence="1">
        <text>carbamoyl phosphate + L-aspartate = N-carbamoyl-L-aspartate + phosphate + H(+)</text>
        <dbReference type="Rhea" id="RHEA:20013"/>
        <dbReference type="ChEBI" id="CHEBI:15378"/>
        <dbReference type="ChEBI" id="CHEBI:29991"/>
        <dbReference type="ChEBI" id="CHEBI:32814"/>
        <dbReference type="ChEBI" id="CHEBI:43474"/>
        <dbReference type="ChEBI" id="CHEBI:58228"/>
        <dbReference type="EC" id="2.1.3.2"/>
    </reaction>
</comment>
<comment type="pathway">
    <text evidence="1">Pyrimidine metabolism; UMP biosynthesis via de novo pathway; (S)-dihydroorotate from bicarbonate: step 2/3.</text>
</comment>
<comment type="subunit">
    <text evidence="1">Heterododecamer (2C3:3R2) of six catalytic PyrB chains organized as two trimers (C3), and six regulatory PyrI chains organized as three dimers (R2).</text>
</comment>
<comment type="similarity">
    <text evidence="1">Belongs to the aspartate/ornithine carbamoyltransferase superfamily. ATCase family.</text>
</comment>
<comment type="sequence caution" evidence="2">
    <conflict type="erroneous initiation">
        <sequence resource="EMBL-CDS" id="ABU72561"/>
    </conflict>
</comment>
<evidence type="ECO:0000255" key="1">
    <source>
        <dbReference type="HAMAP-Rule" id="MF_00001"/>
    </source>
</evidence>
<evidence type="ECO:0000305" key="2"/>
<keyword id="KW-0665">Pyrimidine biosynthesis</keyword>
<keyword id="KW-0808">Transferase</keyword>
<protein>
    <recommendedName>
        <fullName evidence="1">Aspartate carbamoyltransferase catalytic subunit</fullName>
        <ecNumber evidence="1">2.1.3.2</ecNumber>
    </recommendedName>
    <alternativeName>
        <fullName evidence="1">Aspartate transcarbamylase</fullName>
        <shortName evidence="1">ATCase</shortName>
    </alternativeName>
</protein>